<reference key="1">
    <citation type="journal article" date="2000" name="EMBO J.">
        <title>A novel shuttling protein, 4E-T, mediates the nuclear import of the mRNA 5' cap-binding protein, eIF4E.</title>
        <authorList>
            <person name="Dostie J."/>
            <person name="Ferraiuolo M."/>
            <person name="Pause A."/>
            <person name="Adam S.A."/>
            <person name="Sonenberg N."/>
        </authorList>
    </citation>
    <scope>NUCLEOTIDE SEQUENCE [MRNA] (ISOFORM 1)</scope>
    <scope>FUNCTION</scope>
    <scope>SUBCELLULAR LOCATION</scope>
    <scope>PHOSPHORYLATION</scope>
    <scope>TISSUE SPECIFICITY</scope>
    <scope>MUTAGENESIS OF TYR-30 AND 195-ARG-ARG-196</scope>
    <source>
        <tissue>Fetal brain</tissue>
    </source>
</reference>
<reference key="2">
    <citation type="journal article" date="2004" name="Genome Biol.">
        <title>A genome annotation-driven approach to cloning the human ORFeome.</title>
        <authorList>
            <person name="Collins J.E."/>
            <person name="Wright C.L."/>
            <person name="Edwards C.A."/>
            <person name="Davis M.P."/>
            <person name="Grinham J.A."/>
            <person name="Cole C.G."/>
            <person name="Goward M.E."/>
            <person name="Aguado B."/>
            <person name="Mallya M."/>
            <person name="Mokrab Y."/>
            <person name="Huckle E.J."/>
            <person name="Beare D.M."/>
            <person name="Dunham I."/>
        </authorList>
    </citation>
    <scope>NUCLEOTIDE SEQUENCE [LARGE SCALE MRNA] (ISOFORM 1)</scope>
</reference>
<reference key="3">
    <citation type="journal article" date="2004" name="Nat. Genet.">
        <title>Complete sequencing and characterization of 21,243 full-length human cDNAs.</title>
        <authorList>
            <person name="Ota T."/>
            <person name="Suzuki Y."/>
            <person name="Nishikawa T."/>
            <person name="Otsuki T."/>
            <person name="Sugiyama T."/>
            <person name="Irie R."/>
            <person name="Wakamatsu A."/>
            <person name="Hayashi K."/>
            <person name="Sato H."/>
            <person name="Nagai K."/>
            <person name="Kimura K."/>
            <person name="Makita H."/>
            <person name="Sekine M."/>
            <person name="Obayashi M."/>
            <person name="Nishi T."/>
            <person name="Shibahara T."/>
            <person name="Tanaka T."/>
            <person name="Ishii S."/>
            <person name="Yamamoto J."/>
            <person name="Saito K."/>
            <person name="Kawai Y."/>
            <person name="Isono Y."/>
            <person name="Nakamura Y."/>
            <person name="Nagahari K."/>
            <person name="Murakami K."/>
            <person name="Yasuda T."/>
            <person name="Iwayanagi T."/>
            <person name="Wagatsuma M."/>
            <person name="Shiratori A."/>
            <person name="Sudo H."/>
            <person name="Hosoiri T."/>
            <person name="Kaku Y."/>
            <person name="Kodaira H."/>
            <person name="Kondo H."/>
            <person name="Sugawara M."/>
            <person name="Takahashi M."/>
            <person name="Kanda K."/>
            <person name="Yokoi T."/>
            <person name="Furuya T."/>
            <person name="Kikkawa E."/>
            <person name="Omura Y."/>
            <person name="Abe K."/>
            <person name="Kamihara K."/>
            <person name="Katsuta N."/>
            <person name="Sato K."/>
            <person name="Tanikawa M."/>
            <person name="Yamazaki M."/>
            <person name="Ninomiya K."/>
            <person name="Ishibashi T."/>
            <person name="Yamashita H."/>
            <person name="Murakawa K."/>
            <person name="Fujimori K."/>
            <person name="Tanai H."/>
            <person name="Kimata M."/>
            <person name="Watanabe M."/>
            <person name="Hiraoka S."/>
            <person name="Chiba Y."/>
            <person name="Ishida S."/>
            <person name="Ono Y."/>
            <person name="Takiguchi S."/>
            <person name="Watanabe S."/>
            <person name="Yosida M."/>
            <person name="Hotuta T."/>
            <person name="Kusano J."/>
            <person name="Kanehori K."/>
            <person name="Takahashi-Fujii A."/>
            <person name="Hara H."/>
            <person name="Tanase T.-O."/>
            <person name="Nomura Y."/>
            <person name="Togiya S."/>
            <person name="Komai F."/>
            <person name="Hara R."/>
            <person name="Takeuchi K."/>
            <person name="Arita M."/>
            <person name="Imose N."/>
            <person name="Musashino K."/>
            <person name="Yuuki H."/>
            <person name="Oshima A."/>
            <person name="Sasaki N."/>
            <person name="Aotsuka S."/>
            <person name="Yoshikawa Y."/>
            <person name="Matsunawa H."/>
            <person name="Ichihara T."/>
            <person name="Shiohata N."/>
            <person name="Sano S."/>
            <person name="Moriya S."/>
            <person name="Momiyama H."/>
            <person name="Satoh N."/>
            <person name="Takami S."/>
            <person name="Terashima Y."/>
            <person name="Suzuki O."/>
            <person name="Nakagawa S."/>
            <person name="Senoh A."/>
            <person name="Mizoguchi H."/>
            <person name="Goto Y."/>
            <person name="Shimizu F."/>
            <person name="Wakebe H."/>
            <person name="Hishigaki H."/>
            <person name="Watanabe T."/>
            <person name="Sugiyama A."/>
            <person name="Takemoto M."/>
            <person name="Kawakami B."/>
            <person name="Yamazaki M."/>
            <person name="Watanabe K."/>
            <person name="Kumagai A."/>
            <person name="Itakura S."/>
            <person name="Fukuzumi Y."/>
            <person name="Fujimori Y."/>
            <person name="Komiyama M."/>
            <person name="Tashiro H."/>
            <person name="Tanigami A."/>
            <person name="Fujiwara T."/>
            <person name="Ono T."/>
            <person name="Yamada K."/>
            <person name="Fujii Y."/>
            <person name="Ozaki K."/>
            <person name="Hirao M."/>
            <person name="Ohmori Y."/>
            <person name="Kawabata A."/>
            <person name="Hikiji T."/>
            <person name="Kobatake N."/>
            <person name="Inagaki H."/>
            <person name="Ikema Y."/>
            <person name="Okamoto S."/>
            <person name="Okitani R."/>
            <person name="Kawakami T."/>
            <person name="Noguchi S."/>
            <person name="Itoh T."/>
            <person name="Shigeta K."/>
            <person name="Senba T."/>
            <person name="Matsumura K."/>
            <person name="Nakajima Y."/>
            <person name="Mizuno T."/>
            <person name="Morinaga M."/>
            <person name="Sasaki M."/>
            <person name="Togashi T."/>
            <person name="Oyama M."/>
            <person name="Hata H."/>
            <person name="Watanabe M."/>
            <person name="Komatsu T."/>
            <person name="Mizushima-Sugano J."/>
            <person name="Satoh T."/>
            <person name="Shirai Y."/>
            <person name="Takahashi Y."/>
            <person name="Nakagawa K."/>
            <person name="Okumura K."/>
            <person name="Nagase T."/>
            <person name="Nomura N."/>
            <person name="Kikuchi H."/>
            <person name="Masuho Y."/>
            <person name="Yamashita R."/>
            <person name="Nakai K."/>
            <person name="Yada T."/>
            <person name="Nakamura Y."/>
            <person name="Ohara O."/>
            <person name="Isogai T."/>
            <person name="Sugano S."/>
        </authorList>
    </citation>
    <scope>NUCLEOTIDE SEQUENCE [LARGE SCALE MRNA] (ISOFORM 3)</scope>
    <source>
        <tissue>Colon</tissue>
        <tissue>Placenta</tissue>
        <tissue>Teratocarcinoma</tissue>
    </source>
</reference>
<reference key="4">
    <citation type="journal article" date="1999" name="Nature">
        <title>The DNA sequence of human chromosome 22.</title>
        <authorList>
            <person name="Dunham I."/>
            <person name="Hunt A.R."/>
            <person name="Collins J.E."/>
            <person name="Bruskiewich R."/>
            <person name="Beare D.M."/>
            <person name="Clamp M."/>
            <person name="Smink L.J."/>
            <person name="Ainscough R."/>
            <person name="Almeida J.P."/>
            <person name="Babbage A.K."/>
            <person name="Bagguley C."/>
            <person name="Bailey J."/>
            <person name="Barlow K.F."/>
            <person name="Bates K.N."/>
            <person name="Beasley O.P."/>
            <person name="Bird C.P."/>
            <person name="Blakey S.E."/>
            <person name="Bridgeman A.M."/>
            <person name="Buck D."/>
            <person name="Burgess J."/>
            <person name="Burrill W.D."/>
            <person name="Burton J."/>
            <person name="Carder C."/>
            <person name="Carter N.P."/>
            <person name="Chen Y."/>
            <person name="Clark G."/>
            <person name="Clegg S.M."/>
            <person name="Cobley V.E."/>
            <person name="Cole C.G."/>
            <person name="Collier R.E."/>
            <person name="Connor R."/>
            <person name="Conroy D."/>
            <person name="Corby N.R."/>
            <person name="Coville G.J."/>
            <person name="Cox A.V."/>
            <person name="Davis J."/>
            <person name="Dawson E."/>
            <person name="Dhami P.D."/>
            <person name="Dockree C."/>
            <person name="Dodsworth S.J."/>
            <person name="Durbin R.M."/>
            <person name="Ellington A.G."/>
            <person name="Evans K.L."/>
            <person name="Fey J.M."/>
            <person name="Fleming K."/>
            <person name="French L."/>
            <person name="Garner A.A."/>
            <person name="Gilbert J.G.R."/>
            <person name="Goward M.E."/>
            <person name="Grafham D.V."/>
            <person name="Griffiths M.N.D."/>
            <person name="Hall C."/>
            <person name="Hall R.E."/>
            <person name="Hall-Tamlyn G."/>
            <person name="Heathcott R.W."/>
            <person name="Ho S."/>
            <person name="Holmes S."/>
            <person name="Hunt S.E."/>
            <person name="Jones M.C."/>
            <person name="Kershaw J."/>
            <person name="Kimberley A.M."/>
            <person name="King A."/>
            <person name="Laird G.K."/>
            <person name="Langford C.F."/>
            <person name="Leversha M.A."/>
            <person name="Lloyd C."/>
            <person name="Lloyd D.M."/>
            <person name="Martyn I.D."/>
            <person name="Mashreghi-Mohammadi M."/>
            <person name="Matthews L.H."/>
            <person name="Mccann O.T."/>
            <person name="Mcclay J."/>
            <person name="Mclaren S."/>
            <person name="McMurray A.A."/>
            <person name="Milne S.A."/>
            <person name="Mortimore B.J."/>
            <person name="Odell C.N."/>
            <person name="Pavitt R."/>
            <person name="Pearce A.V."/>
            <person name="Pearson D."/>
            <person name="Phillimore B.J.C.T."/>
            <person name="Phillips S.H."/>
            <person name="Plumb R.W."/>
            <person name="Ramsay H."/>
            <person name="Ramsey Y."/>
            <person name="Rogers L."/>
            <person name="Ross M.T."/>
            <person name="Scott C.E."/>
            <person name="Sehra H.K."/>
            <person name="Skuce C.D."/>
            <person name="Smalley S."/>
            <person name="Smith M.L."/>
            <person name="Soderlund C."/>
            <person name="Spragon L."/>
            <person name="Steward C.A."/>
            <person name="Sulston J.E."/>
            <person name="Swann R.M."/>
            <person name="Vaudin M."/>
            <person name="Wall M."/>
            <person name="Wallis J.M."/>
            <person name="Whiteley M.N."/>
            <person name="Willey D.L."/>
            <person name="Williams L."/>
            <person name="Williams S.A."/>
            <person name="Williamson H."/>
            <person name="Wilmer T.E."/>
            <person name="Wilming L."/>
            <person name="Wright C.L."/>
            <person name="Hubbard T."/>
            <person name="Bentley D.R."/>
            <person name="Beck S."/>
            <person name="Rogers J."/>
            <person name="Shimizu N."/>
            <person name="Minoshima S."/>
            <person name="Kawasaki K."/>
            <person name="Sasaki T."/>
            <person name="Asakawa S."/>
            <person name="Kudoh J."/>
            <person name="Shintani A."/>
            <person name="Shibuya K."/>
            <person name="Yoshizaki Y."/>
            <person name="Aoki N."/>
            <person name="Mitsuyama S."/>
            <person name="Roe B.A."/>
            <person name="Chen F."/>
            <person name="Chu L."/>
            <person name="Crabtree J."/>
            <person name="Deschamps S."/>
            <person name="Do A."/>
            <person name="Do T."/>
            <person name="Dorman A."/>
            <person name="Fang F."/>
            <person name="Fu Y."/>
            <person name="Hu P."/>
            <person name="Hua A."/>
            <person name="Kenton S."/>
            <person name="Lai H."/>
            <person name="Lao H.I."/>
            <person name="Lewis J."/>
            <person name="Lewis S."/>
            <person name="Lin S.-P."/>
            <person name="Loh P."/>
            <person name="Malaj E."/>
            <person name="Nguyen T."/>
            <person name="Pan H."/>
            <person name="Phan S."/>
            <person name="Qi S."/>
            <person name="Qian Y."/>
            <person name="Ray L."/>
            <person name="Ren Q."/>
            <person name="Shaull S."/>
            <person name="Sloan D."/>
            <person name="Song L."/>
            <person name="Wang Q."/>
            <person name="Wang Y."/>
            <person name="Wang Z."/>
            <person name="White J."/>
            <person name="Willingham D."/>
            <person name="Wu H."/>
            <person name="Yao Z."/>
            <person name="Zhan M."/>
            <person name="Zhang G."/>
            <person name="Chissoe S."/>
            <person name="Murray J."/>
            <person name="Miller N."/>
            <person name="Minx P."/>
            <person name="Fulton R."/>
            <person name="Johnson D."/>
            <person name="Bemis G."/>
            <person name="Bentley D."/>
            <person name="Bradshaw H."/>
            <person name="Bourne S."/>
            <person name="Cordes M."/>
            <person name="Du Z."/>
            <person name="Fulton L."/>
            <person name="Goela D."/>
            <person name="Graves T."/>
            <person name="Hawkins J."/>
            <person name="Hinds K."/>
            <person name="Kemp K."/>
            <person name="Latreille P."/>
            <person name="Layman D."/>
            <person name="Ozersky P."/>
            <person name="Rohlfing T."/>
            <person name="Scheet P."/>
            <person name="Walker C."/>
            <person name="Wamsley A."/>
            <person name="Wohldmann P."/>
            <person name="Pepin K."/>
            <person name="Nelson J."/>
            <person name="Korf I."/>
            <person name="Bedell J.A."/>
            <person name="Hillier L.W."/>
            <person name="Mardis E."/>
            <person name="Waterston R."/>
            <person name="Wilson R."/>
            <person name="Emanuel B.S."/>
            <person name="Shaikh T."/>
            <person name="Kurahashi H."/>
            <person name="Saitta S."/>
            <person name="Budarf M.L."/>
            <person name="McDermid H.E."/>
            <person name="Johnson A."/>
            <person name="Wong A.C.C."/>
            <person name="Morrow B.E."/>
            <person name="Edelmann L."/>
            <person name="Kim U.J."/>
            <person name="Shizuya H."/>
            <person name="Simon M.I."/>
            <person name="Dumanski J.P."/>
            <person name="Peyrard M."/>
            <person name="Kedra D."/>
            <person name="Seroussi E."/>
            <person name="Fransson I."/>
            <person name="Tapia I."/>
            <person name="Bruder C.E."/>
            <person name="O'Brien K.P."/>
            <person name="Wilkinson P."/>
            <person name="Bodenteich A."/>
            <person name="Hartman K."/>
            <person name="Hu X."/>
            <person name="Khan A.S."/>
            <person name="Lane L."/>
            <person name="Tilahun Y."/>
            <person name="Wright H."/>
        </authorList>
    </citation>
    <scope>NUCLEOTIDE SEQUENCE [LARGE SCALE GENOMIC DNA]</scope>
</reference>
<reference key="5">
    <citation type="submission" date="2005-07" db="EMBL/GenBank/DDBJ databases">
        <authorList>
            <person name="Mural R.J."/>
            <person name="Istrail S."/>
            <person name="Sutton G.G."/>
            <person name="Florea L."/>
            <person name="Halpern A.L."/>
            <person name="Mobarry C.M."/>
            <person name="Lippert R."/>
            <person name="Walenz B."/>
            <person name="Shatkay H."/>
            <person name="Dew I."/>
            <person name="Miller J.R."/>
            <person name="Flanigan M.J."/>
            <person name="Edwards N.J."/>
            <person name="Bolanos R."/>
            <person name="Fasulo D."/>
            <person name="Halldorsson B.V."/>
            <person name="Hannenhalli S."/>
            <person name="Turner R."/>
            <person name="Yooseph S."/>
            <person name="Lu F."/>
            <person name="Nusskern D.R."/>
            <person name="Shue B.C."/>
            <person name="Zheng X.H."/>
            <person name="Zhong F."/>
            <person name="Delcher A.L."/>
            <person name="Huson D.H."/>
            <person name="Kravitz S.A."/>
            <person name="Mouchard L."/>
            <person name="Reinert K."/>
            <person name="Remington K.A."/>
            <person name="Clark A.G."/>
            <person name="Waterman M.S."/>
            <person name="Eichler E.E."/>
            <person name="Adams M.D."/>
            <person name="Hunkapiller M.W."/>
            <person name="Myers E.W."/>
            <person name="Venter J.C."/>
        </authorList>
    </citation>
    <scope>NUCLEOTIDE SEQUENCE [LARGE SCALE GENOMIC DNA]</scope>
</reference>
<reference key="6">
    <citation type="journal article" date="2004" name="Genome Res.">
        <title>The status, quality, and expansion of the NIH full-length cDNA project: the Mammalian Gene Collection (MGC).</title>
        <authorList>
            <consortium name="The MGC Project Team"/>
        </authorList>
    </citation>
    <scope>NUCLEOTIDE SEQUENCE [LARGE SCALE MRNA] (ISOFORMS 1 AND 2)</scope>
    <source>
        <tissue>Testis</tissue>
    </source>
</reference>
<reference key="7">
    <citation type="journal article" date="2005" name="J. Cell Biol.">
        <title>A role for the eIF4E-binding protein 4E-T in P-body formation and mRNA decay.</title>
        <authorList>
            <person name="Ferraiuolo M.A."/>
            <person name="Basak S."/>
            <person name="Dostie J."/>
            <person name="Murray E.L."/>
            <person name="Schoenberg D.R."/>
            <person name="Sonenberg N."/>
        </authorList>
    </citation>
    <scope>FUNCTION</scope>
    <scope>SUBCELLULAR LOCATION</scope>
    <scope>INTERACTION WITH EIF4E</scope>
    <scope>DOMAIN</scope>
    <scope>MUTAGENESIS OF TYR-30</scope>
</reference>
<reference key="8">
    <citation type="journal article" date="2006" name="PLoS Pathog.">
        <title>Human retroviral host restriction factors APOBEC3G and APOBEC3F localize to mRNA processing bodies.</title>
        <authorList>
            <person name="Wichroski M.J."/>
            <person name="Robb G.B."/>
            <person name="Rana T.M."/>
        </authorList>
    </citation>
    <scope>INTERACTION WITH APOBEC3G</scope>
</reference>
<reference key="9">
    <citation type="journal article" date="2008" name="J. Proteome Res.">
        <title>Phosphoproteome of resting human platelets.</title>
        <authorList>
            <person name="Zahedi R.P."/>
            <person name="Lewandrowski U."/>
            <person name="Wiesner J."/>
            <person name="Wortelkamp S."/>
            <person name="Moebius J."/>
            <person name="Schuetz C."/>
            <person name="Walter U."/>
            <person name="Gambaryan S."/>
            <person name="Sickmann A."/>
        </authorList>
    </citation>
    <scope>PHOSPHORYLATION [LARGE SCALE ANALYSIS] AT SER-920</scope>
    <scope>IDENTIFICATION BY MASS SPECTROMETRY [LARGE SCALE ANALYSIS]</scope>
    <source>
        <tissue>Platelet</tissue>
    </source>
</reference>
<reference key="10">
    <citation type="journal article" date="2008" name="Proc. Natl. Acad. Sci. U.S.A.">
        <title>A quantitative atlas of mitotic phosphorylation.</title>
        <authorList>
            <person name="Dephoure N."/>
            <person name="Zhou C."/>
            <person name="Villen J."/>
            <person name="Beausoleil S.A."/>
            <person name="Bakalarski C.E."/>
            <person name="Elledge S.J."/>
            <person name="Gygi S.P."/>
        </authorList>
    </citation>
    <scope>PHOSPHORYLATION [LARGE SCALE ANALYSIS] AT SER-120; SER-136; SER-138; SER-345; SER-564 AND SER-951</scope>
    <scope>IDENTIFICATION BY MASS SPECTROMETRY [LARGE SCALE ANALYSIS]</scope>
    <source>
        <tissue>Cervix carcinoma</tissue>
    </source>
</reference>
<reference key="11">
    <citation type="journal article" date="2009" name="Anal. Chem.">
        <title>Lys-N and trypsin cover complementary parts of the phosphoproteome in a refined SCX-based approach.</title>
        <authorList>
            <person name="Gauci S."/>
            <person name="Helbig A.O."/>
            <person name="Slijper M."/>
            <person name="Krijgsveld J."/>
            <person name="Heck A.J."/>
            <person name="Mohammed S."/>
        </authorList>
    </citation>
    <scope>IDENTIFICATION BY MASS SPECTROMETRY [LARGE SCALE ANALYSIS]</scope>
</reference>
<reference key="12">
    <citation type="journal article" date="2009" name="Sci. Signal.">
        <title>Quantitative phosphoproteomic analysis of T cell receptor signaling reveals system-wide modulation of protein-protein interactions.</title>
        <authorList>
            <person name="Mayya V."/>
            <person name="Lundgren D.H."/>
            <person name="Hwang S.-I."/>
            <person name="Rezaul K."/>
            <person name="Wu L."/>
            <person name="Eng J.K."/>
            <person name="Rodionov V."/>
            <person name="Han D.K."/>
        </authorList>
    </citation>
    <scope>PHOSPHORYLATION [LARGE SCALE ANALYSIS] AT SER-5; SER-564; SER-587 AND SER-693</scope>
    <scope>IDENTIFICATION BY MASS SPECTROMETRY [LARGE SCALE ANALYSIS]</scope>
    <source>
        <tissue>Leukemic T-cell</tissue>
    </source>
</reference>
<reference key="13">
    <citation type="journal article" date="2009" name="Science">
        <title>Lysine acetylation targets protein complexes and co-regulates major cellular functions.</title>
        <authorList>
            <person name="Choudhary C."/>
            <person name="Kumar C."/>
            <person name="Gnad F."/>
            <person name="Nielsen M.L."/>
            <person name="Rehman M."/>
            <person name="Walther T.C."/>
            <person name="Olsen J.V."/>
            <person name="Mann M."/>
        </authorList>
    </citation>
    <scope>ACETYLATION [LARGE SCALE ANALYSIS] AT LYS-486</scope>
    <scope>IDENTIFICATION BY MASS SPECTROMETRY [LARGE SCALE ANALYSIS]</scope>
</reference>
<reference key="14">
    <citation type="journal article" date="2010" name="Sci. Signal.">
        <title>Quantitative phosphoproteomics reveals widespread full phosphorylation site occupancy during mitosis.</title>
        <authorList>
            <person name="Olsen J.V."/>
            <person name="Vermeulen M."/>
            <person name="Santamaria A."/>
            <person name="Kumar C."/>
            <person name="Miller M.L."/>
            <person name="Jensen L.J."/>
            <person name="Gnad F."/>
            <person name="Cox J."/>
            <person name="Jensen T.S."/>
            <person name="Nigg E.A."/>
            <person name="Brunak S."/>
            <person name="Mann M."/>
        </authorList>
    </citation>
    <scope>PHOSPHORYLATION [LARGE SCALE ANALYSIS] AT SER-5; SER-301; SER-513; SER-564 AND SER-951</scope>
    <scope>IDENTIFICATION BY MASS SPECTROMETRY [LARGE SCALE ANALYSIS]</scope>
    <source>
        <tissue>Cervix carcinoma</tissue>
    </source>
</reference>
<reference key="15">
    <citation type="journal article" date="2011" name="BMC Syst. Biol.">
        <title>Initial characterization of the human central proteome.</title>
        <authorList>
            <person name="Burkard T.R."/>
            <person name="Planyavsky M."/>
            <person name="Kaupe I."/>
            <person name="Breitwieser F.P."/>
            <person name="Buerckstuemmer T."/>
            <person name="Bennett K.L."/>
            <person name="Superti-Furga G."/>
            <person name="Colinge J."/>
        </authorList>
    </citation>
    <scope>IDENTIFICATION BY MASS SPECTROMETRY [LARGE SCALE ANALYSIS]</scope>
</reference>
<reference key="16">
    <citation type="journal article" date="2011" name="Sci. Signal.">
        <title>System-wide temporal characterization of the proteome and phosphoproteome of human embryonic stem cell differentiation.</title>
        <authorList>
            <person name="Rigbolt K.T."/>
            <person name="Prokhorova T.A."/>
            <person name="Akimov V."/>
            <person name="Henningsen J."/>
            <person name="Johansen P.T."/>
            <person name="Kratchmarova I."/>
            <person name="Kassem M."/>
            <person name="Mann M."/>
            <person name="Olsen J.V."/>
            <person name="Blagoev B."/>
        </authorList>
    </citation>
    <scope>PHOSPHORYLATION [LARGE SCALE ANALYSIS] AT SER-951</scope>
    <scope>IDENTIFICATION BY MASS SPECTROMETRY [LARGE SCALE ANALYSIS]</scope>
</reference>
<reference key="17">
    <citation type="journal article" date="2012" name="Mol. Biol. Cell">
        <title>RNA-related nuclear functions of human Pat1b, the P-body mRNA decay factor.</title>
        <authorList>
            <person name="Marnef A."/>
            <person name="Weil D."/>
            <person name="Standart N."/>
        </authorList>
    </citation>
    <scope>SUBCELLULAR LOCATION</scope>
</reference>
<reference key="18">
    <citation type="journal article" date="2012" name="Mol. Cell. Biol.">
        <title>Phosphorylation of the eukaryotic translation initiation factor 4E-transporter (4E-T) by c-Jun N-terminal kinase promotes stress-dependent P-body assembly.</title>
        <authorList>
            <person name="Cargnello M."/>
            <person name="Tcherkezian J."/>
            <person name="Dorn J.F."/>
            <person name="Huttlin E.L."/>
            <person name="Maddox P.S."/>
            <person name="Gygi S.P."/>
            <person name="Roux P.P."/>
        </authorList>
    </citation>
    <scope>FUNCTION</scope>
    <scope>SUBCELLULAR LOCATION</scope>
    <scope>PHOSPHORYLATION AT SER-301; SER-374; SER-513; SER-587; SER-693 AND SER-752</scope>
    <scope>MUTAGENESIS OF SER-301; SER-374; SER-513; SER-587; SER-693 AND SER-752</scope>
</reference>
<reference key="19">
    <citation type="journal article" date="2013" name="J. Proteome Res.">
        <title>Toward a comprehensive characterization of a human cancer cell phosphoproteome.</title>
        <authorList>
            <person name="Zhou H."/>
            <person name="Di Palma S."/>
            <person name="Preisinger C."/>
            <person name="Peng M."/>
            <person name="Polat A.N."/>
            <person name="Heck A.J."/>
            <person name="Mohammed S."/>
        </authorList>
    </citation>
    <scope>PHOSPHORYLATION [LARGE SCALE ANALYSIS] AT SER-5; SER-74; SER-78; SER-115; SER-417; SER-513; SER-564; SER-587 AND SER-951</scope>
    <scope>IDENTIFICATION BY MASS SPECTROMETRY [LARGE SCALE ANALYSIS]</scope>
    <source>
        <tissue>Cervix carcinoma</tissue>
        <tissue>Erythroleukemia</tissue>
    </source>
</reference>
<reference key="20">
    <citation type="journal article" date="2014" name="J. Proteomics">
        <title>An enzyme assisted RP-RPLC approach for in-depth analysis of human liver phosphoproteome.</title>
        <authorList>
            <person name="Bian Y."/>
            <person name="Song C."/>
            <person name="Cheng K."/>
            <person name="Dong M."/>
            <person name="Wang F."/>
            <person name="Huang J."/>
            <person name="Sun D."/>
            <person name="Wang L."/>
            <person name="Ye M."/>
            <person name="Zou H."/>
        </authorList>
    </citation>
    <scope>PHOSPHORYLATION [LARGE SCALE ANALYSIS] AT SER-353 AND SER-951</scope>
    <scope>IDENTIFICATION BY MASS SPECTROMETRY [LARGE SCALE ANALYSIS]</scope>
    <source>
        <tissue>Liver</tissue>
    </source>
</reference>
<reference key="21">
    <citation type="journal article" date="2013" name="PLoS ONE">
        <title>Investigating the consequences of eIF4E2 (4EHP) interaction with 4E-transporter on its cellular distribution in HeLa cells.</title>
        <authorList>
            <person name="Kubacka D."/>
            <person name="Kamenska A."/>
            <person name="Broomhead H."/>
            <person name="Minshall N."/>
            <person name="Darzynkiewicz E."/>
            <person name="Standart N."/>
        </authorList>
    </citation>
    <scope>SUBCELLULAR LOCATION</scope>
    <scope>INTERACTION WITH EIF4E AND EIF4E2</scope>
    <scope>DOMAIN</scope>
    <scope>MUTAGENESIS OF 30-TYR--LEU-36; TYR-30; 35-LEU-LEU-36 AND 54-LYS--TRP-61</scope>
</reference>
<reference key="22">
    <citation type="journal article" date="2014" name="Nucleic Acids Res.">
        <title>Human 4E-T represses translation of bound mRNAs and enhances microRNA-mediated silencing.</title>
        <authorList>
            <person name="Kamenska A."/>
            <person name="Lu W.T."/>
            <person name="Kubacka D."/>
            <person name="Broomhead H."/>
            <person name="Minshall N."/>
            <person name="Bushell M."/>
            <person name="Standart N."/>
        </authorList>
    </citation>
    <scope>FUNCTION</scope>
    <scope>SUBCELLULAR LOCATION</scope>
    <scope>INTERACTION WITH EIF4E</scope>
    <scope>DOMAIN</scope>
    <scope>MUTAGENESIS OF TYR-30</scope>
</reference>
<reference key="23">
    <citation type="journal article" date="2015" name="Cell Rep.">
        <title>The eIF4E-Binding protein 4E-T is a component of the mRNA decay machinery that bridges the 5' and 3' termini of target mRNAs.</title>
        <authorList>
            <person name="Nishimura T."/>
            <person name="Padamsi Z."/>
            <person name="Fakim H."/>
            <person name="Milette S."/>
            <person name="Dunham W.H."/>
            <person name="Gingras A.C."/>
            <person name="Fabian M.R."/>
        </authorList>
    </citation>
    <scope>INTERACTION WITH DDX6; CNOT1; PATL1 AND LSM14A</scope>
</reference>
<reference key="24">
    <citation type="journal article" date="2015" name="PLoS ONE">
        <title>Phosphorylation of eIF4E confers resistance to cellular stress and DNA-damaging agents through an interaction with 4E-T: a rationale for novel therapeutic approaches.</title>
        <authorList>
            <person name="Martinez A."/>
            <person name="Sese M."/>
            <person name="Losa J.H."/>
            <person name="Robichaud N."/>
            <person name="Sonenberg N."/>
            <person name="Aasen T."/>
            <person name="Ramon Y Cajal S."/>
        </authorList>
    </citation>
    <scope>INTERACTION WITH EIF4E</scope>
</reference>
<reference key="25">
    <citation type="journal article" date="2016" name="Nucleic Acids Res.">
        <title>The DDX6-4E-T interaction mediates translational repression and P-body assembly.</title>
        <authorList>
            <person name="Kamenska A."/>
            <person name="Simpson C."/>
            <person name="Vindry C."/>
            <person name="Broomhead H."/>
            <person name="Benard M."/>
            <person name="Ernoult-Lange M."/>
            <person name="Lee B.P."/>
            <person name="Harries L.W."/>
            <person name="Weil D."/>
            <person name="Standart N."/>
        </authorList>
    </citation>
    <scope>FUNCTION</scope>
    <scope>DOMAIN</scope>
    <scope>INTERACTION WITH DDX6; CSDE1 AND CNOT1</scope>
</reference>
<reference key="26">
    <citation type="journal article" date="2017" name="Nat. Struct. Mol. Biol.">
        <title>Site-specific mapping of the human SUMO proteome reveals co-modification with phosphorylation.</title>
        <authorList>
            <person name="Hendriks I.A."/>
            <person name="Lyon D."/>
            <person name="Young C."/>
            <person name="Jensen L.J."/>
            <person name="Vertegaal A.C."/>
            <person name="Nielsen M.L."/>
        </authorList>
    </citation>
    <scope>SUMOYLATION [LARGE SCALE ANALYSIS] AT LYS-410</scope>
    <scope>IDENTIFICATION BY MASS SPECTROMETRY [LARGE SCALE ANALYSIS]</scope>
</reference>
<reference key="27">
    <citation type="journal article" date="2017" name="Proc. Natl. Acad. Sci. U.S.A.">
        <title>Cap-binding protein 4EHP effects translation silencing by microRNAs.</title>
        <authorList>
            <person name="Chapat C."/>
            <person name="Jafarnejad S.M."/>
            <person name="Matta-Camacho E."/>
            <person name="Hesketh G.G."/>
            <person name="Gelbart I.A."/>
            <person name="Attig J."/>
            <person name="Gkogkas C.G."/>
            <person name="Alain T."/>
            <person name="Stern-Ginossar N."/>
            <person name="Fabian M.R."/>
            <person name="Gingras A.C."/>
            <person name="Duchaine T.F."/>
            <person name="Sonenberg N."/>
        </authorList>
    </citation>
    <scope>FUNCTION</scope>
    <scope>INTERACTION WITH EIF4E AND EIF4E2</scope>
    <scope>MUTAGENESIS OF 30-TYR--LEU-36 AND TYR-30</scope>
</reference>
<reference key="28">
    <citation type="journal article" date="2017" name="Sci. Rep.">
        <title>Dual mechanisms regulate the nucleocytoplasmic localization of human DDX6.</title>
        <authorList>
            <person name="Huang J.H."/>
            <person name="Ku W.C."/>
            <person name="Chen Y.C."/>
            <person name="Chang Y.L."/>
            <person name="Chu C.Y."/>
        </authorList>
    </citation>
    <scope>FUNCTION</scope>
    <scope>SUBCELLULAR LOCATION</scope>
    <scope>INTERACTION WITH DDX6</scope>
</reference>
<reference key="29">
    <citation type="journal article" date="2019" name="Am. J. Hum. Genet.">
        <title>Rare de novo missense variants in RNA helicase DDX6 cause intellectual disability and dysmorphic features and lead to P-body defects and RNA dysregulation.</title>
        <authorList>
            <person name="Balak C."/>
            <person name="Benard M."/>
            <person name="Schaefer E."/>
            <person name="Iqbal S."/>
            <person name="Ramsey K."/>
            <person name="Ernoult-Lange M."/>
            <person name="Mattioli F."/>
            <person name="Llaci L."/>
            <person name="Geoffroy V."/>
            <person name="Courel M."/>
            <person name="Naymik M."/>
            <person name="Bachman K.K."/>
            <person name="Pfundt R."/>
            <person name="Rump P."/>
            <person name="Ter Beest J."/>
            <person name="Wentzensen I.M."/>
            <person name="Monaghan K.G."/>
            <person name="McWalter K."/>
            <person name="Richholt R."/>
            <person name="Le Bechec A."/>
            <person name="Jepsen W."/>
            <person name="De Both M."/>
            <person name="Belnap N."/>
            <person name="Boland A."/>
            <person name="Piras I.S."/>
            <person name="Deleuze J.F."/>
            <person name="Szelinger S."/>
            <person name="Dollfus H."/>
            <person name="Chelly J."/>
            <person name="Muller J."/>
            <person name="Campbell A."/>
            <person name="Lal D."/>
            <person name="Rangasamy S."/>
            <person name="Mandel J.L."/>
            <person name="Narayanan V."/>
            <person name="Huentelman M."/>
            <person name="Weil D."/>
            <person name="Piton A."/>
        </authorList>
    </citation>
    <scope>INTERACTION WITH DDX6</scope>
</reference>
<reference key="30">
    <citation type="journal article" date="2019" name="Genes Dev.">
        <title>Molecular basis for GIGYF-Me31B complex assembly in 4EHP-mediated translational repression.</title>
        <authorList>
            <person name="Peter D."/>
            <person name="Ruscica V."/>
            <person name="Bawankar P."/>
            <person name="Weber R."/>
            <person name="Helms S."/>
            <person name="Valkov E."/>
            <person name="Igreja C."/>
            <person name="Izaurralde E."/>
        </authorList>
    </citation>
    <scope>INTERACTION WITH DDX6</scope>
</reference>
<reference key="31">
    <citation type="journal article" date="2020" name="Genes Dev.">
        <title>4E-T-bound mRNAs are stored in a silenced and deadenylated form.</title>
        <authorList>
            <person name="Raesch F."/>
            <person name="Weber R."/>
            <person name="Izaurralde E."/>
            <person name="Igreja C."/>
        </authorList>
    </citation>
    <scope>FUNCTION</scope>
    <scope>SUBCELLULAR LOCATION</scope>
    <scope>INTERACTION WITH CSDE1; DDX6; CNOT1; PATL1 AND LSM14A</scope>
</reference>
<reference evidence="26" key="32">
    <citation type="journal article" date="2015" name="Cell Rep.">
        <title>Structure of a human 4E-T/DDX6/CNOT1 complex reveals the different interplay of DDX6-binding proteins with the CCR4-NOT complex.</title>
        <authorList>
            <person name="Ozgur S."/>
            <person name="Basquin J."/>
            <person name="Kamenska A."/>
            <person name="Filipowicz W."/>
            <person name="Standart N."/>
            <person name="Conti E."/>
        </authorList>
    </citation>
    <scope>X-RAY CRYSTALLOGRAPHY (2.10 ANGSTROMS) OF 199-239 IN COMPLEX WITH DDX6 AND CNOT1</scope>
    <scope>INTERACTION WITH DDX6 AND CNOT1</scope>
</reference>
<reference evidence="27" key="33">
    <citation type="journal article" date="2018" name="EMBO J.">
        <title>Molecular architecture of LSM14 interactions involved in the assembly of mRNA silencing complexes.</title>
        <authorList>
            <person name="Brandmann T."/>
            <person name="Fakim H."/>
            <person name="Padamsi Z."/>
            <person name="Youn J.Y."/>
            <person name="Gingras A.C."/>
            <person name="Fabian M.R."/>
            <person name="Jinek M."/>
        </authorList>
    </citation>
    <scope>X-RAY CRYSTALLOGRAPHY (2.62 ANGSTROMS) OF 954-985 IN COMPLEX WITH LSM14A</scope>
    <scope>INTERACTION WITH LSM14A</scope>
    <scope>MUTAGENESIS OF 955-LEU--TRP-958; TRP-958; PHE-959; SER-961; SER-970; 978-VAL--LEU-981; VAL-978 AND GLU-982</scope>
</reference>
<proteinExistence type="evidence at protein level"/>
<name>4ET_HUMAN</name>
<comment type="function">
    <text evidence="1 3 4 7 9 13 14 15 19">EIF4E-binding protein that regulates translation and stability of mRNAs in processing bodies (P-bodies) (PubMed:16157702, PubMed:24335285, PubMed:27342281, PubMed:32354837). Plays a key role in P-bodies to coordinate the storage of translationally inactive mRNAs in the cytoplasm and prevent their degradation (PubMed:24335285, PubMed:32354837). Acts as a binding platform for multiple RNA-binding proteins: promotes deadenylation of mRNAs via its interaction with the CCR4-NOT complex, and blocks decapping via interaction with eIF4E (EIF4E and EIF4E2), thereby protecting deadenylated and repressed mRNAs from degradation (PubMed:27342281, PubMed:32354837). Component of a multiprotein complex that sequesters and represses translation of proneurogenic factors during neurogenesis (By similarity). Promotes miRNA-mediated translational repression (PubMed:24335285, PubMed:27342281, PubMed:28487484). Required for the formation of P-bodies (PubMed:16157702, PubMed:22966201, PubMed:27342281, PubMed:32354837). Involved in mRNA translational repression mediated by the miRNA effector TNRC6B by protecting TNRC6B-targeted mRNAs from decapping and subsequent decay (PubMed:32354837). Also acts as a nucleoplasmic shuttling protein, which mediates the nuclear import of EIF4E and DDX6 by a piggy-back mechanism (PubMed:10856257, PubMed:28216671).</text>
</comment>
<comment type="subunit">
    <text evidence="3 4 5 8 9 10 11 12 13 14 15 16 17 18 19">Interacts (via YXXXXLphi motif) with EIF4E (PubMed:10856257, PubMed:16157702, PubMed:23991149, PubMed:24335285, PubMed:25923732, PubMed:28487484). Interacts (via YXXXXLphi motif) with EIF4E2 (PubMed:23991149, PubMed:28487484). Interacts with DDX6 (PubMed:26027925, PubMed:26489469, PubMed:27342281, PubMed:28216671, PubMed:31422817, PubMed:31439631, PubMed:32354837). Interacts with CSDE1/UNR (PubMed:27342281, PubMed:32354837). Interacts with CNOT1; promoting association with the CCR4-NOT complex (PubMed:26027925, PubMed:26489469, PubMed:27342281, PubMed:32354837). Interacts with LSM14A; promoting EIF4ENIF1 localization to P-bodies (PubMed:26027925, PubMed:29510985, PubMed:32354837). Interacts with PATL1 (PubMed:26027925, PubMed:32354837). Interacts with importin beta only in the presence of importin alpha, suggesting a direct interaction with importin alpha (PubMed:10856257). Interacts with APOBEC3G in an RNA-dependent manner (PubMed:16699599).</text>
</comment>
<comment type="interaction">
    <interactant intactId="EBI-301024">
        <id>Q9NRA8</id>
    </interactant>
    <interactant intactId="EBI-930964">
        <id>P54253</id>
        <label>ATXN1</label>
    </interactant>
    <organismsDiffer>false</organismsDiffer>
    <experiments>4</experiments>
</comment>
<comment type="interaction">
    <interactant intactId="EBI-301024">
        <id>Q9NRA8</id>
    </interactant>
    <interactant intactId="EBI-749051">
        <id>Q8IYR0</id>
        <label>CFAP206</label>
    </interactant>
    <organismsDiffer>false</organismsDiffer>
    <experiments>3</experiments>
</comment>
<comment type="interaction">
    <interactant intactId="EBI-301024">
        <id>Q9NRA8</id>
    </interactant>
    <interactant intactId="EBI-351257">
        <id>P26196</id>
        <label>DDX6</label>
    </interactant>
    <organismsDiffer>false</organismsDiffer>
    <experiments>17</experiments>
</comment>
<comment type="interaction">
    <interactant intactId="EBI-301024">
        <id>Q9NRA8</id>
    </interactant>
    <interactant intactId="EBI-745369">
        <id>Q9H4E7</id>
        <label>DEF6</label>
    </interactant>
    <organismsDiffer>false</organismsDiffer>
    <experiments>3</experiments>
</comment>
<comment type="interaction">
    <interactant intactId="EBI-301024">
        <id>Q9NRA8</id>
    </interactant>
    <interactant intactId="EBI-740376">
        <id>Q86UW9</id>
        <label>DTX2</label>
    </interactant>
    <organismsDiffer>false</organismsDiffer>
    <experiments>7</experiments>
</comment>
<comment type="interaction">
    <interactant intactId="EBI-301024">
        <id>Q9NRA8</id>
    </interactant>
    <interactant intactId="EBI-743105">
        <id>Q5JVL4</id>
        <label>EFHC1</label>
    </interactant>
    <organismsDiffer>false</organismsDiffer>
    <experiments>9</experiments>
</comment>
<comment type="interaction">
    <interactant intactId="EBI-301024">
        <id>Q9NRA8</id>
    </interactant>
    <interactant intactId="EBI-73440">
        <id>P06730</id>
        <label>EIF4E</label>
    </interactant>
    <organismsDiffer>false</organismsDiffer>
    <experiments>14</experiments>
</comment>
<comment type="interaction">
    <interactant intactId="EBI-301024">
        <id>Q9NRA8</id>
    </interactant>
    <interactant intactId="EBI-32715456">
        <id>P06730-1</id>
        <label>EIF4E</label>
    </interactant>
    <organismsDiffer>false</organismsDiffer>
    <experiments>2</experiments>
</comment>
<comment type="interaction">
    <interactant intactId="EBI-301024">
        <id>Q9NRA8</id>
    </interactant>
    <interactant intactId="EBI-398610">
        <id>O60573</id>
        <label>EIF4E2</label>
    </interactant>
    <organismsDiffer>false</organismsDiffer>
    <experiments>6</experiments>
</comment>
<comment type="interaction">
    <interactant intactId="EBI-301024">
        <id>Q9NRA8</id>
    </interactant>
    <interactant intactId="EBI-32715389">
        <id>O60573-1</id>
        <label>EIF4E2</label>
    </interactant>
    <organismsDiffer>false</organismsDiffer>
    <experiments>3</experiments>
</comment>
<comment type="interaction">
    <interactant intactId="EBI-301024">
        <id>Q9NRA8</id>
    </interactant>
    <interactant intactId="EBI-2339898">
        <id>Q9NW38</id>
        <label>FANCL</label>
    </interactant>
    <organismsDiffer>false</organismsDiffer>
    <experiments>3</experiments>
</comment>
<comment type="interaction">
    <interactant intactId="EBI-301024">
        <id>Q9NRA8</id>
    </interactant>
    <interactant intactId="EBI-352986">
        <id>P52597</id>
        <label>HNRNPF</label>
    </interactant>
    <organismsDiffer>false</organismsDiffer>
    <experiments>3</experiments>
</comment>
<comment type="interaction">
    <interactant intactId="EBI-301024">
        <id>Q9NRA8</id>
    </interactant>
    <interactant intactId="EBI-742756">
        <id>P08727</id>
        <label>KRT19</label>
    </interactant>
    <organismsDiffer>false</organismsDiffer>
    <experiments>3</experiments>
</comment>
<comment type="interaction">
    <interactant intactId="EBI-301024">
        <id>Q9NRA8</id>
    </interactant>
    <interactant intactId="EBI-739909">
        <id>Q969R5</id>
        <label>L3MBTL2</label>
    </interactant>
    <organismsDiffer>false</organismsDiffer>
    <experiments>3</experiments>
</comment>
<comment type="interaction">
    <interactant intactId="EBI-301024">
        <id>Q9NRA8</id>
    </interactant>
    <interactant intactId="EBI-536879">
        <id>O43482</id>
        <label>OIP5</label>
    </interactant>
    <organismsDiffer>false</organismsDiffer>
    <experiments>3</experiments>
</comment>
<comment type="interaction">
    <interactant intactId="EBI-301024">
        <id>Q9NRA8</id>
    </interactant>
    <interactant intactId="EBI-12754095">
        <id>P86480</id>
        <label>PRR20D</label>
    </interactant>
    <organismsDiffer>false</organismsDiffer>
    <experiments>3</experiments>
</comment>
<comment type="interaction">
    <interactant intactId="EBI-301024">
        <id>Q9NRA8</id>
    </interactant>
    <interactant intactId="EBI-5235340">
        <id>Q7Z699</id>
        <label>SPRED1</label>
    </interactant>
    <organismsDiffer>false</organismsDiffer>
    <experiments>3</experiments>
</comment>
<comment type="interaction">
    <interactant intactId="EBI-301024">
        <id>Q9NRA8</id>
    </interactant>
    <interactant intactId="EBI-740781">
        <id>Q9BT92</id>
        <label>TCHP</label>
    </interactant>
    <organismsDiffer>false</organismsDiffer>
    <experiments>3</experiments>
</comment>
<comment type="interaction">
    <interactant intactId="EBI-301024">
        <id>Q9NRA8</id>
    </interactant>
    <interactant intactId="EBI-948354">
        <id>Q6DKK2</id>
        <label>TTC19</label>
    </interactant>
    <organismsDiffer>false</organismsDiffer>
    <experiments>3</experiments>
</comment>
<comment type="interaction">
    <interactant intactId="EBI-301024">
        <id>Q9NRA8</id>
    </interactant>
    <interactant intactId="EBI-359793">
        <id>P40222</id>
        <label>TXLNA</label>
    </interactant>
    <organismsDiffer>false</organismsDiffer>
    <experiments>3</experiments>
</comment>
<comment type="interaction">
    <interactant intactId="EBI-301024">
        <id>Q9NRA8</id>
    </interactant>
    <interactant intactId="EBI-743272">
        <id>O75604</id>
        <label>USP2</label>
    </interactant>
    <organismsDiffer>false</organismsDiffer>
    <experiments>3</experiments>
</comment>
<comment type="interaction">
    <interactant intactId="EBI-301024">
        <id>Q9NRA8</id>
    </interactant>
    <interactant intactId="EBI-6863741">
        <id>PRO_0000037548</id>
        <dbReference type="UniProtKB" id="Q9WMX2"/>
    </interactant>
    <organismsDiffer>true</organismsDiffer>
    <experiments>3</experiments>
</comment>
<comment type="subcellular location">
    <subcellularLocation>
        <location evidence="4 7 8 9 19">Cytoplasm</location>
        <location evidence="4 7 8 9 19">P-body</location>
    </subcellularLocation>
    <subcellularLocation>
        <location evidence="3 6 14">Cytoplasm</location>
    </subcellularLocation>
    <subcellularLocation>
        <location evidence="3 6 14">Nucleus</location>
    </subcellularLocation>
    <subcellularLocation>
        <location evidence="6">Nucleus</location>
        <location evidence="6">PML body</location>
    </subcellularLocation>
    <subcellularLocation>
        <location evidence="6">Nucleus speckle</location>
    </subcellularLocation>
    <text evidence="3 4 6">Predominantly cytoplasmic (PubMed:10856257). Mainly localizes to processing bodies (P-bodies) (PubMed:16157702). Shuttles between the nucleus and the cytoplasm in a CRM1-dependent manner (PubMed:10856257). Localization to nuclear foci and speckles requires active transcription (PubMed:22090346).</text>
</comment>
<comment type="alternative products">
    <event type="alternative splicing"/>
    <isoform>
        <id>Q9NRA8-1</id>
        <name>1</name>
        <sequence type="displayed"/>
    </isoform>
    <isoform>
        <id>Q9NRA8-2</id>
        <name>2</name>
        <sequence type="described" ref="VSP_003783 VSP_003784 VSP_047042"/>
    </isoform>
    <isoform>
        <id>Q9NRA8-3</id>
        <name>3</name>
        <sequence type="described" ref="VSP_047042"/>
    </isoform>
</comment>
<comment type="tissue specificity">
    <text evidence="3">Widely expressed.</text>
</comment>
<comment type="domain">
    <text evidence="13 14">Intrinsically disordered protein with multiple low-complexity regions that confer binding to multiple RNA translation, deadenylation and decapping factors.</text>
</comment>
<comment type="domain">
    <text evidence="3 4 8 9">The YXXXXLphi motif mediates interaction with eIF4E (EIF4E and EIF4E2).</text>
</comment>
<comment type="PTM">
    <text evidence="1 7">Phosphorylation by MAPK8/JNK1 and or MAPK9/JNK2 in response to oxidative stress promotes P-body assembly (PubMed:22966201). Phosphorylated during meiotic maturation (By similarity).</text>
</comment>
<comment type="similarity">
    <text evidence="23">Belongs to the 4E-T/EIF4E-T family.</text>
</comment>
<comment type="sequence caution" evidence="23">
    <conflict type="erroneous initiation">
        <sequence resource="EMBL-CDS" id="BAB15092"/>
    </conflict>
</comment>
<comment type="sequence caution" evidence="23">
    <conflict type="erroneous initiation">
        <sequence resource="EMBL-CDS" id="BAC11194"/>
    </conflict>
</comment>
<organism>
    <name type="scientific">Homo sapiens</name>
    <name type="common">Human</name>
    <dbReference type="NCBI Taxonomy" id="9606"/>
    <lineage>
        <taxon>Eukaryota</taxon>
        <taxon>Metazoa</taxon>
        <taxon>Chordata</taxon>
        <taxon>Craniata</taxon>
        <taxon>Vertebrata</taxon>
        <taxon>Euteleostomi</taxon>
        <taxon>Mammalia</taxon>
        <taxon>Eutheria</taxon>
        <taxon>Euarchontoglires</taxon>
        <taxon>Primates</taxon>
        <taxon>Haplorrhini</taxon>
        <taxon>Catarrhini</taxon>
        <taxon>Hominidae</taxon>
        <taxon>Homo</taxon>
    </lineage>
</organism>
<sequence length="985" mass="108201">MDRRSMGETESGDAFLDLKKPPASKCPHRYTKEELLDIKELPHSKQRPSCLSEKYDSDGVWDPEKWHASLYPASGRSSPVESLKKELDTDRPSLVRRIVDPRERVKEDDLDVVLSPQRRSFGGGCHVTAAVSSRRSGSPLEKDSDGLRLLGGRRIGSGRIISARTFEKDHRLSDKDLRDLRDRDRERDFKDKRFRREFGDSKRVFGERRRNDSYTEEEPEWFSAGPTSQSETIELTGFDDKILEEDHKGRKRTRRRTASVKEGIVECNGGVAEEDEVEVILAQEPAADQEVPRDAVLPEQSPGDFDFNEFFNLDKVPCLASMIEDVLGEGSVSASRFSRWFSNPSRSGSRSSSLGSTPHEELERLAGLEQAILSPGQNSGNYFAPIPLEDHAENKVDILEMLQKAKVDLKPLLSSLSANKEKLKESSHSGVVLSVEEVEAGLKGLKVDQQVKNSTPFMAEHLEETLSAVTNNRQLKKDGDMTAFNKLVSTMKASGTLPSQPKVSRNLESHLMSPAEIPGQPVPKNILQELLGQPVQRPASSNLLSGLMGSLEPTTSLLGQRAPSPPLSQVFQTRAASADYLRPRIPSPIGFTPGPQQLLGDPFQGMRKPMSPITAQMSQLELQQAALEGLALPHDLAVQAANFYQPGFGKPQVDRTRDGFRNRQQRVTKSPAPVHRGNSSSPAPAASITSMLSPSFTPTSVIRKMYESKEKSKEEPASGKAALGDSKEDTQKASEENLLSSSSVPSADRDSSPTTNSKLSALQRSSCSTPLSQANRYTKEQDYRPKATGRKTPTLASPVPTTPFLRPVHQVPLVPHVPMVRPAHQLHPGLVQRMLAQGVHPQHLPSLLQTGVLPPGMDLSHLQGISGPILGQPFYPLPAASHPLLNPRPGTPLHLAMVQQQLQRSVLHPPGSGSHAAAVSVQTTPQNVPSRSGLPHMHSQLEHRPSQRSSSPVGLAKWFGSDVLQQPLPSMPAKVISVDELEYRQ</sequence>
<evidence type="ECO:0000250" key="1">
    <source>
        <dbReference type="UniProtKB" id="Q9EST3"/>
    </source>
</evidence>
<evidence type="ECO:0000256" key="2">
    <source>
        <dbReference type="SAM" id="MobiDB-lite"/>
    </source>
</evidence>
<evidence type="ECO:0000269" key="3">
    <source>
    </source>
</evidence>
<evidence type="ECO:0000269" key="4">
    <source>
    </source>
</evidence>
<evidence type="ECO:0000269" key="5">
    <source>
    </source>
</evidence>
<evidence type="ECO:0000269" key="6">
    <source>
    </source>
</evidence>
<evidence type="ECO:0000269" key="7">
    <source>
    </source>
</evidence>
<evidence type="ECO:0000269" key="8">
    <source>
    </source>
</evidence>
<evidence type="ECO:0000269" key="9">
    <source>
    </source>
</evidence>
<evidence type="ECO:0000269" key="10">
    <source>
    </source>
</evidence>
<evidence type="ECO:0000269" key="11">
    <source>
    </source>
</evidence>
<evidence type="ECO:0000269" key="12">
    <source>
    </source>
</evidence>
<evidence type="ECO:0000269" key="13">
    <source>
    </source>
</evidence>
<evidence type="ECO:0000269" key="14">
    <source>
    </source>
</evidence>
<evidence type="ECO:0000269" key="15">
    <source>
    </source>
</evidence>
<evidence type="ECO:0000269" key="16">
    <source>
    </source>
</evidence>
<evidence type="ECO:0000269" key="17">
    <source>
    </source>
</evidence>
<evidence type="ECO:0000269" key="18">
    <source>
    </source>
</evidence>
<evidence type="ECO:0000269" key="19">
    <source>
    </source>
</evidence>
<evidence type="ECO:0000303" key="20">
    <source>
    </source>
</evidence>
<evidence type="ECO:0000303" key="21">
    <source>
    </source>
</evidence>
<evidence type="ECO:0000303" key="22">
    <source>
    </source>
</evidence>
<evidence type="ECO:0000305" key="23"/>
<evidence type="ECO:0000305" key="24">
    <source>
    </source>
</evidence>
<evidence type="ECO:0000312" key="25">
    <source>
        <dbReference type="HGNC" id="HGNC:16687"/>
    </source>
</evidence>
<evidence type="ECO:0007744" key="26">
    <source>
        <dbReference type="PDB" id="5ANR"/>
    </source>
</evidence>
<evidence type="ECO:0007744" key="27">
    <source>
        <dbReference type="PDB" id="6F9W"/>
    </source>
</evidence>
<evidence type="ECO:0007744" key="28">
    <source>
    </source>
</evidence>
<evidence type="ECO:0007744" key="29">
    <source>
    </source>
</evidence>
<evidence type="ECO:0007744" key="30">
    <source>
    </source>
</evidence>
<evidence type="ECO:0007744" key="31">
    <source>
    </source>
</evidence>
<evidence type="ECO:0007744" key="32">
    <source>
    </source>
</evidence>
<evidence type="ECO:0007744" key="33">
    <source>
    </source>
</evidence>
<evidence type="ECO:0007744" key="34">
    <source>
    </source>
</evidence>
<evidence type="ECO:0007744" key="35">
    <source>
    </source>
</evidence>
<evidence type="ECO:0007744" key="36">
    <source>
    </source>
</evidence>
<evidence type="ECO:0007829" key="37">
    <source>
        <dbReference type="PDB" id="5ANR"/>
    </source>
</evidence>
<evidence type="ECO:0007829" key="38">
    <source>
        <dbReference type="PDB" id="6F9W"/>
    </source>
</evidence>
<evidence type="ECO:0007829" key="39">
    <source>
        <dbReference type="PDB" id="6X2R"/>
    </source>
</evidence>
<accession>Q9NRA8</accession>
<accession>B1AKL2</accession>
<accession>B1AKL3</accession>
<accession>B2RBF1</accession>
<accession>Q8NCF2</accession>
<accession>Q9H708</accession>
<feature type="chain" id="PRO_0000064381" description="Eukaryotic translation initiation factor 4E transporter">
    <location>
        <begin position="1"/>
        <end position="985"/>
    </location>
</feature>
<feature type="region of interest" description="Disordered" evidence="2">
    <location>
        <begin position="1"/>
        <end position="24"/>
    </location>
</feature>
<feature type="region of interest" description="Interaction with CSDE1" evidence="13">
    <location>
        <begin position="131"/>
        <end position="161"/>
    </location>
</feature>
<feature type="region of interest" description="Disordered" evidence="2">
    <location>
        <begin position="208"/>
        <end position="230"/>
    </location>
</feature>
<feature type="region of interest" description="Interaction with DDX6" evidence="13">
    <location>
        <begin position="219"/>
        <end position="240"/>
    </location>
</feature>
<feature type="region of interest" description="Interaction with LSM14A" evidence="11">
    <location>
        <begin position="448"/>
        <end position="490"/>
    </location>
</feature>
<feature type="region of interest" description="Disordered" evidence="2">
    <location>
        <begin position="664"/>
        <end position="693"/>
    </location>
</feature>
<feature type="region of interest" description="Interaction with PATL1" evidence="11">
    <location>
        <begin position="695"/>
        <end position="713"/>
    </location>
</feature>
<feature type="region of interest" description="Disordered" evidence="2">
    <location>
        <begin position="707"/>
        <end position="803"/>
    </location>
</feature>
<feature type="region of interest" description="Disordered" evidence="2">
    <location>
        <begin position="922"/>
        <end position="953"/>
    </location>
</feature>
<feature type="region of interest" description="Interaction with LSM14A" evidence="11">
    <location>
        <begin position="940"/>
        <end position="985"/>
    </location>
</feature>
<feature type="short sequence motif" description="YXXXXLphi motif" evidence="3 9">
    <location>
        <begin position="30"/>
        <end position="36"/>
    </location>
</feature>
<feature type="short sequence motif" description="Nuclear localization signal" evidence="24">
    <location>
        <begin position="195"/>
        <end position="211"/>
    </location>
</feature>
<feature type="short sequence motif" description="Nuclear export signal" evidence="24">
    <location>
        <begin position="438"/>
        <end position="447"/>
    </location>
</feature>
<feature type="short sequence motif" description="Nuclear export signal" evidence="24">
    <location>
        <begin position="613"/>
        <end position="638"/>
    </location>
</feature>
<feature type="compositionally biased region" description="Basic and acidic residues" evidence="2">
    <location>
        <begin position="707"/>
        <end position="717"/>
    </location>
</feature>
<feature type="compositionally biased region" description="Basic and acidic residues" evidence="2">
    <location>
        <begin position="725"/>
        <end position="735"/>
    </location>
</feature>
<feature type="compositionally biased region" description="Low complexity" evidence="2">
    <location>
        <begin position="736"/>
        <end position="746"/>
    </location>
</feature>
<feature type="compositionally biased region" description="Polar residues" evidence="2">
    <location>
        <begin position="754"/>
        <end position="776"/>
    </location>
</feature>
<feature type="modified residue" description="Phosphoserine" evidence="31 32 34">
    <location>
        <position position="5"/>
    </location>
</feature>
<feature type="modified residue" description="Phosphoserine" evidence="34">
    <location>
        <position position="74"/>
    </location>
</feature>
<feature type="modified residue" description="Phosphoserine" evidence="34">
    <location>
        <position position="78"/>
    </location>
</feature>
<feature type="modified residue" description="Phosphoserine" evidence="34">
    <location>
        <position position="115"/>
    </location>
</feature>
<feature type="modified residue" description="Phosphoserine" evidence="29">
    <location>
        <position position="120"/>
    </location>
</feature>
<feature type="modified residue" description="Phosphoserine" evidence="29">
    <location>
        <position position="136"/>
    </location>
</feature>
<feature type="modified residue" description="Phosphoserine" evidence="29">
    <location>
        <position position="138"/>
    </location>
</feature>
<feature type="modified residue" description="Phosphoserine" evidence="7 32">
    <location>
        <position position="301"/>
    </location>
</feature>
<feature type="modified residue" description="Phosphoserine" evidence="29">
    <location>
        <position position="345"/>
    </location>
</feature>
<feature type="modified residue" description="Phosphoserine" evidence="35">
    <location>
        <position position="353"/>
    </location>
</feature>
<feature type="modified residue" description="Phosphoserine" evidence="7">
    <location>
        <position position="374"/>
    </location>
</feature>
<feature type="modified residue" description="Phosphoserine" evidence="34">
    <location>
        <position position="417"/>
    </location>
</feature>
<feature type="modified residue" description="N6-acetyllysine" evidence="30">
    <location>
        <position position="486"/>
    </location>
</feature>
<feature type="modified residue" description="Phosphoserine" evidence="7 32 34">
    <location>
        <position position="513"/>
    </location>
</feature>
<feature type="modified residue" description="Phosphoserine" evidence="29 31 32 34">
    <location>
        <position position="564"/>
    </location>
</feature>
<feature type="modified residue" description="Phosphoserine" evidence="7 31 34">
    <location>
        <position position="587"/>
    </location>
</feature>
<feature type="modified residue" description="Phosphoserine" evidence="7 31">
    <location>
        <position position="693"/>
    </location>
</feature>
<feature type="modified residue" description="Phosphoserine" evidence="7">
    <location>
        <position position="752"/>
    </location>
</feature>
<feature type="modified residue" description="Phosphoserine" evidence="28">
    <location>
        <position position="920"/>
    </location>
</feature>
<feature type="modified residue" description="Phosphoserine" evidence="29 32 33 34 35">
    <location>
        <position position="951"/>
    </location>
</feature>
<feature type="cross-link" description="Glycyl lysine isopeptide (Lys-Gly) (interchain with G-Cter in SUMO2)" evidence="36">
    <location>
        <position position="410"/>
    </location>
</feature>
<feature type="splice variant" id="VSP_003783" description="In isoform 2." evidence="22">
    <location>
        <begin position="100"/>
        <end position="262"/>
    </location>
</feature>
<feature type="splice variant" id="VSP_003784" description="In isoform 2." evidence="22">
    <location>
        <begin position="493"/>
        <end position="504"/>
    </location>
</feature>
<feature type="splice variant" id="VSP_047042" description="In isoform 2 and isoform 3." evidence="21 22">
    <original>Q</original>
    <variation>QQ</variation>
    <location>
        <position position="616"/>
    </location>
</feature>
<feature type="mutagenesis site" description="Abolished interaction with EIF4E2." evidence="8 15">
    <original>YTKEELL</original>
    <variation>ATKEEAA</variation>
    <location>
        <begin position="30"/>
        <end position="36"/>
    </location>
</feature>
<feature type="mutagenesis site" description="Abolishes interaction with EIF4E and EIF4E2. Impaired ability to repress mRNA translation." evidence="3 4 9 15">
    <original>Y</original>
    <variation>A</variation>
    <location>
        <position position="30"/>
    </location>
</feature>
<feature type="mutagenesis site" description="Abolished interaction with EIF4E2." evidence="8">
    <original>LL</original>
    <variation>AA</variation>
    <location>
        <begin position="35"/>
        <end position="36"/>
    </location>
</feature>
<feature type="mutagenesis site" description="Strongly reduced interaction with EIF4E and EIF4E2." evidence="8">
    <original>KYDSDGVW</original>
    <variation>ADSDAA</variation>
    <location>
        <begin position="54"/>
        <end position="61"/>
    </location>
</feature>
<feature type="mutagenesis site" description="Abolishes the nuclear localization." evidence="3">
    <original>RR</original>
    <variation>NS</variation>
    <location>
        <begin position="195"/>
        <end position="196"/>
    </location>
</feature>
<feature type="mutagenesis site" description="In S6A mutant; abolished phosphorylation by MAPK8/JNK1; impaired P-body assembly in response to oxidative stress when associated with A-374, A-513, A-587, A-693 and A-752." evidence="7">
    <original>S</original>
    <variation>A</variation>
    <location>
        <position position="301"/>
    </location>
</feature>
<feature type="mutagenesis site" description="In S6A mutant; abolished phosphorylation by MAPK8/JNK1; impaired P-body assembly in response to oxidative stress when associated with A-301, A-513, A-587, A-693 and A-752." evidence="7">
    <original>S</original>
    <variation>A</variation>
    <location>
        <position position="374"/>
    </location>
</feature>
<feature type="mutagenesis site" description="In S6A mutant; abolished phosphorylation by MAPK8/JNK1; impaired P-body assembly in response to oxidative stress when associated with A-301, A-374, A-587, A-693 and A-752." evidence="7">
    <original>S</original>
    <variation>A</variation>
    <location>
        <position position="513"/>
    </location>
</feature>
<feature type="mutagenesis site" description="In S6A mutant; abolished phosphorylation by MAPK8/JNK1; impaired P-body assembly in response to oxidative stress when associated with A-301, A-374, A-513, A-693 and A-752." evidence="7">
    <original>S</original>
    <variation>A</variation>
    <location>
        <position position="587"/>
    </location>
</feature>
<feature type="mutagenesis site" description="In S6A mutant; abolished phosphorylation by MAPK8/JNK1; impaired P-body assembly in response to oxidative stress when associated with A-301, A-374, A-513, A-587 and A-752." evidence="7">
    <original>S</original>
    <variation>A</variation>
    <location>
        <position position="693"/>
    </location>
</feature>
<feature type="mutagenesis site" description="In S6A mutant; abolished phosphorylation by MAPK8/JNK1; impaired P-body assembly in response to oxidative stress when associated with A-301, A-374, A-513, A-587 and A-693." evidence="7">
    <original>S</original>
    <variation>A</variation>
    <location>
        <position position="752"/>
    </location>
</feature>
<feature type="mutagenesis site" description="Abolished interaction with LSM14A." evidence="16">
    <original>LAKW</original>
    <variation>AAKA</variation>
    <location>
        <begin position="955"/>
        <end position="958"/>
    </location>
</feature>
<feature type="mutagenesis site" description="Abolished interaction with LSM14A." evidence="16">
    <original>W</original>
    <variation>A</variation>
    <location>
        <position position="958"/>
    </location>
</feature>
<feature type="mutagenesis site" description="Abolished interaction with LSM14A." evidence="16">
    <original>F</original>
    <variation>A</variation>
    <location>
        <position position="959"/>
    </location>
</feature>
<feature type="mutagenesis site" description="Does not affect interaction with LSM14A." evidence="16">
    <original>S</original>
    <variation>A</variation>
    <location>
        <position position="961"/>
    </location>
</feature>
<feature type="mutagenesis site" description="Does not affect interaction with LSM14A." evidence="16">
    <original>S</original>
    <variation>A</variation>
    <location>
        <position position="970"/>
    </location>
</feature>
<feature type="mutagenesis site" description="Abolished interaction with LSM14A." evidence="16">
    <original>VDEL</original>
    <variation>ADEA</variation>
    <location>
        <begin position="978"/>
        <end position="981"/>
    </location>
</feature>
<feature type="mutagenesis site" description="Abolished interaction with LSM14A." evidence="16">
    <original>V</original>
    <variation>A</variation>
    <location>
        <position position="978"/>
    </location>
</feature>
<feature type="mutagenesis site" description="Abolished interaction with LSM14A." evidence="16">
    <original>E</original>
    <variation>K</variation>
    <location>
        <position position="982"/>
    </location>
</feature>
<feature type="sequence conflict" description="In Ref. 1; AAF81693." evidence="23" ref="1">
    <original>L</original>
    <variation>F</variation>
    <location>
        <position position="114"/>
    </location>
</feature>
<feature type="sequence conflict" description="In Ref. 6; AAH33028." evidence="23" ref="6">
    <original>Q</original>
    <variation>R</variation>
    <location>
        <position position="825"/>
    </location>
</feature>
<feature type="helix" evidence="37">
    <location>
        <begin position="220"/>
        <end position="223"/>
    </location>
</feature>
<feature type="helix" evidence="39">
    <location>
        <begin position="435"/>
        <end position="443"/>
    </location>
</feature>
<feature type="helix" evidence="38">
    <location>
        <begin position="955"/>
        <end position="957"/>
    </location>
</feature>
<feature type="helix" evidence="38">
    <location>
        <begin position="961"/>
        <end position="965"/>
    </location>
</feature>
<feature type="strand" evidence="38">
    <location>
        <begin position="975"/>
        <end position="977"/>
    </location>
</feature>
<feature type="helix" evidence="38">
    <location>
        <begin position="978"/>
        <end position="984"/>
    </location>
</feature>
<protein>
    <recommendedName>
        <fullName evidence="20">Eukaryotic translation initiation factor 4E transporter</fullName>
        <shortName evidence="20">4E-T</shortName>
        <shortName evidence="20">eIF4E transporter</shortName>
    </recommendedName>
    <alternativeName>
        <fullName>Eukaryotic translation initiation factor 4E nuclear import factor 1</fullName>
    </alternativeName>
</protein>
<gene>
    <name evidence="25" type="primary">EIF4ENIF1</name>
</gene>
<dbReference type="EMBL" id="AF240775">
    <property type="protein sequence ID" value="AAF81693.1"/>
    <property type="molecule type" value="mRNA"/>
</dbReference>
<dbReference type="EMBL" id="CR456386">
    <property type="protein sequence ID" value="CAG30272.1"/>
    <property type="molecule type" value="mRNA"/>
</dbReference>
<dbReference type="EMBL" id="AK025254">
    <property type="protein sequence ID" value="BAB15092.1"/>
    <property type="status" value="ALT_INIT"/>
    <property type="molecule type" value="mRNA"/>
</dbReference>
<dbReference type="EMBL" id="AK074768">
    <property type="protein sequence ID" value="BAC11194.1"/>
    <property type="status" value="ALT_INIT"/>
    <property type="molecule type" value="mRNA"/>
</dbReference>
<dbReference type="EMBL" id="AK314636">
    <property type="protein sequence ID" value="BAG37198.1"/>
    <property type="molecule type" value="mRNA"/>
</dbReference>
<dbReference type="EMBL" id="AL096701">
    <property type="status" value="NOT_ANNOTATED_CDS"/>
    <property type="molecule type" value="Genomic_DNA"/>
</dbReference>
<dbReference type="EMBL" id="CH471095">
    <property type="protein sequence ID" value="EAW59977.1"/>
    <property type="molecule type" value="Genomic_DNA"/>
</dbReference>
<dbReference type="EMBL" id="BC032941">
    <property type="protein sequence ID" value="AAH32941.1"/>
    <property type="molecule type" value="mRNA"/>
</dbReference>
<dbReference type="EMBL" id="BC033028">
    <property type="protein sequence ID" value="AAH33028.1"/>
    <property type="molecule type" value="mRNA"/>
</dbReference>
<dbReference type="CCDS" id="CCDS13898.1">
    <molecule id="Q9NRA8-1"/>
</dbReference>
<dbReference type="CCDS" id="CCDS54520.1">
    <molecule id="Q9NRA8-2"/>
</dbReference>
<dbReference type="RefSeq" id="NP_001157973.1">
    <molecule id="Q9NRA8-1"/>
    <property type="nucleotide sequence ID" value="NM_001164501.2"/>
</dbReference>
<dbReference type="RefSeq" id="NP_001157974.1">
    <molecule id="Q9NRA8-2"/>
    <property type="nucleotide sequence ID" value="NM_001164502.2"/>
</dbReference>
<dbReference type="RefSeq" id="NP_062817.2">
    <molecule id="Q9NRA8-1"/>
    <property type="nucleotide sequence ID" value="NM_019843.4"/>
</dbReference>
<dbReference type="RefSeq" id="XP_005261743.1">
    <molecule id="Q9NRA8-3"/>
    <property type="nucleotide sequence ID" value="XM_005261686.4"/>
</dbReference>
<dbReference type="RefSeq" id="XP_005261744.1">
    <molecule id="Q9NRA8-3"/>
    <property type="nucleotide sequence ID" value="XM_005261687.4"/>
</dbReference>
<dbReference type="RefSeq" id="XP_005261745.1">
    <property type="nucleotide sequence ID" value="XM_005261688.2"/>
</dbReference>
<dbReference type="RefSeq" id="XP_011528582.1">
    <property type="nucleotide sequence ID" value="XM_011530280.1"/>
</dbReference>
<dbReference type="RefSeq" id="XP_011528583.1">
    <property type="nucleotide sequence ID" value="XM_011530281.2"/>
</dbReference>
<dbReference type="RefSeq" id="XP_016884353.1">
    <property type="nucleotide sequence ID" value="XM_017028864.1"/>
</dbReference>
<dbReference type="RefSeq" id="XP_054181774.1">
    <molecule id="Q9NRA8-3"/>
    <property type="nucleotide sequence ID" value="XM_054325799.1"/>
</dbReference>
<dbReference type="RefSeq" id="XP_054181775.1">
    <molecule id="Q9NRA8-3"/>
    <property type="nucleotide sequence ID" value="XM_054325800.1"/>
</dbReference>
<dbReference type="PDB" id="5ANR">
    <property type="method" value="X-ray"/>
    <property type="resolution" value="2.10 A"/>
    <property type="chains" value="C=199-239"/>
</dbReference>
<dbReference type="PDB" id="6F9W">
    <property type="method" value="X-ray"/>
    <property type="resolution" value="2.62 A"/>
    <property type="chains" value="B=954-985"/>
</dbReference>
<dbReference type="PDB" id="6X2R">
    <property type="method" value="X-ray"/>
    <property type="resolution" value="2.30 A"/>
    <property type="chains" value="D=434-448"/>
</dbReference>
<dbReference type="PDBsum" id="5ANR"/>
<dbReference type="PDBsum" id="6F9W"/>
<dbReference type="PDBsum" id="6X2R"/>
<dbReference type="SMR" id="Q9NRA8"/>
<dbReference type="BioGRID" id="121148">
    <property type="interactions" value="322"/>
</dbReference>
<dbReference type="CORUM" id="Q9NRA8"/>
<dbReference type="FunCoup" id="Q9NRA8">
    <property type="interactions" value="4307"/>
</dbReference>
<dbReference type="IntAct" id="Q9NRA8">
    <property type="interactions" value="115"/>
</dbReference>
<dbReference type="MINT" id="Q9NRA8"/>
<dbReference type="STRING" id="9606.ENSP00000380659"/>
<dbReference type="GlyGen" id="Q9NRA8">
    <property type="glycosylation" value="6 sites, 1 O-linked glycan (5 sites)"/>
</dbReference>
<dbReference type="iPTMnet" id="Q9NRA8"/>
<dbReference type="MetOSite" id="Q9NRA8"/>
<dbReference type="PhosphoSitePlus" id="Q9NRA8"/>
<dbReference type="BioMuta" id="EIF4ENIF1"/>
<dbReference type="DMDM" id="22095430"/>
<dbReference type="jPOST" id="Q9NRA8"/>
<dbReference type="MassIVE" id="Q9NRA8"/>
<dbReference type="PaxDb" id="9606-ENSP00000380659"/>
<dbReference type="PeptideAtlas" id="Q9NRA8"/>
<dbReference type="ProteomicsDB" id="3074"/>
<dbReference type="ProteomicsDB" id="82323">
    <molecule id="Q9NRA8-1"/>
</dbReference>
<dbReference type="ProteomicsDB" id="82324">
    <molecule id="Q9NRA8-2"/>
</dbReference>
<dbReference type="Pumba" id="Q9NRA8"/>
<dbReference type="Antibodypedia" id="279">
    <property type="antibodies" value="303 antibodies from 29 providers"/>
</dbReference>
<dbReference type="DNASU" id="56478"/>
<dbReference type="Ensembl" id="ENST00000330125.10">
    <molecule id="Q9NRA8-1"/>
    <property type="protein sequence ID" value="ENSP00000328103.5"/>
    <property type="gene ID" value="ENSG00000184708.18"/>
</dbReference>
<dbReference type="Ensembl" id="ENST00000344710.9">
    <molecule id="Q9NRA8-2"/>
    <property type="protein sequence ID" value="ENSP00000342927.5"/>
    <property type="gene ID" value="ENSG00000184708.18"/>
</dbReference>
<dbReference type="Ensembl" id="ENST00000397525.5">
    <molecule id="Q9NRA8-1"/>
    <property type="protein sequence ID" value="ENSP00000380659.1"/>
    <property type="gene ID" value="ENSG00000184708.18"/>
</dbReference>
<dbReference type="GeneID" id="56478"/>
<dbReference type="KEGG" id="hsa:56478"/>
<dbReference type="MANE-Select" id="ENST00000330125.10">
    <property type="protein sequence ID" value="ENSP00000328103.5"/>
    <property type="RefSeq nucleotide sequence ID" value="NM_019843.4"/>
    <property type="RefSeq protein sequence ID" value="NP_062817.2"/>
</dbReference>
<dbReference type="UCSC" id="uc003akz.3">
    <molecule id="Q9NRA8-1"/>
    <property type="organism name" value="human"/>
</dbReference>
<dbReference type="AGR" id="HGNC:16687"/>
<dbReference type="CTD" id="56478"/>
<dbReference type="DisGeNET" id="56478"/>
<dbReference type="GeneCards" id="EIF4ENIF1"/>
<dbReference type="HGNC" id="HGNC:16687">
    <property type="gene designation" value="EIF4ENIF1"/>
</dbReference>
<dbReference type="HPA" id="ENSG00000184708">
    <property type="expression patterns" value="Low tissue specificity"/>
</dbReference>
<dbReference type="MalaCards" id="EIF4ENIF1"/>
<dbReference type="MIM" id="607445">
    <property type="type" value="gene"/>
</dbReference>
<dbReference type="neXtProt" id="NX_Q9NRA8"/>
<dbReference type="OpenTargets" id="ENSG00000184708"/>
<dbReference type="PharmGKB" id="PA38410"/>
<dbReference type="VEuPathDB" id="HostDB:ENSG00000184708"/>
<dbReference type="eggNOG" id="ENOG502QRQE">
    <property type="taxonomic scope" value="Eukaryota"/>
</dbReference>
<dbReference type="GeneTree" id="ENSGT00390000012071"/>
<dbReference type="InParanoid" id="Q9NRA8"/>
<dbReference type="OMA" id="WITRGSW"/>
<dbReference type="OrthoDB" id="8916892at2759"/>
<dbReference type="PAN-GO" id="Q9NRA8">
    <property type="GO annotations" value="4 GO annotations based on evolutionary models"/>
</dbReference>
<dbReference type="PhylomeDB" id="Q9NRA8"/>
<dbReference type="TreeFam" id="TF101531"/>
<dbReference type="PathwayCommons" id="Q9NRA8"/>
<dbReference type="SignaLink" id="Q9NRA8"/>
<dbReference type="SIGNOR" id="Q9NRA8"/>
<dbReference type="BioGRID-ORCS" id="56478">
    <property type="hits" value="56 hits in 1163 CRISPR screens"/>
</dbReference>
<dbReference type="CD-CODE" id="232F8A39">
    <property type="entry name" value="P-body"/>
</dbReference>
<dbReference type="CD-CODE" id="804901D1">
    <property type="entry name" value="Nuclear speckle"/>
</dbReference>
<dbReference type="CD-CODE" id="B5B9A610">
    <property type="entry name" value="PML body"/>
</dbReference>
<dbReference type="CD-CODE" id="DEE660B4">
    <property type="entry name" value="Stress granule"/>
</dbReference>
<dbReference type="ChiTaRS" id="EIF4ENIF1">
    <property type="organism name" value="human"/>
</dbReference>
<dbReference type="GeneWiki" id="EIF4ENIF1"/>
<dbReference type="GenomeRNAi" id="56478"/>
<dbReference type="Pharos" id="Q9NRA8">
    <property type="development level" value="Tbio"/>
</dbReference>
<dbReference type="PRO" id="PR:Q9NRA8"/>
<dbReference type="Proteomes" id="UP000005640">
    <property type="component" value="Chromosome 22"/>
</dbReference>
<dbReference type="RNAct" id="Q9NRA8">
    <property type="molecule type" value="protein"/>
</dbReference>
<dbReference type="Bgee" id="ENSG00000184708">
    <property type="expression patterns" value="Expressed in secondary oocyte and 196 other cell types or tissues"/>
</dbReference>
<dbReference type="ExpressionAtlas" id="Q9NRA8">
    <property type="expression patterns" value="baseline and differential"/>
</dbReference>
<dbReference type="GO" id="GO:0005737">
    <property type="term" value="C:cytoplasm"/>
    <property type="evidence" value="ECO:0000314"/>
    <property type="project" value="UniProtKB"/>
</dbReference>
<dbReference type="GO" id="GO:0005829">
    <property type="term" value="C:cytosol"/>
    <property type="evidence" value="ECO:0007669"/>
    <property type="project" value="Ensembl"/>
</dbReference>
<dbReference type="GO" id="GO:0043231">
    <property type="term" value="C:intracellular membrane-bounded organelle"/>
    <property type="evidence" value="ECO:0000314"/>
    <property type="project" value="HPA"/>
</dbReference>
<dbReference type="GO" id="GO:0016020">
    <property type="term" value="C:membrane"/>
    <property type="evidence" value="ECO:0007005"/>
    <property type="project" value="UniProtKB"/>
</dbReference>
<dbReference type="GO" id="GO:0016607">
    <property type="term" value="C:nuclear speck"/>
    <property type="evidence" value="ECO:0007669"/>
    <property type="project" value="UniProtKB-SubCell"/>
</dbReference>
<dbReference type="GO" id="GO:0005634">
    <property type="term" value="C:nucleus"/>
    <property type="evidence" value="ECO:0000314"/>
    <property type="project" value="UniProtKB"/>
</dbReference>
<dbReference type="GO" id="GO:0000932">
    <property type="term" value="C:P-body"/>
    <property type="evidence" value="ECO:0000314"/>
    <property type="project" value="UniProtKB"/>
</dbReference>
<dbReference type="GO" id="GO:0016605">
    <property type="term" value="C:PML body"/>
    <property type="evidence" value="ECO:0007669"/>
    <property type="project" value="UniProtKB-SubCell"/>
</dbReference>
<dbReference type="GO" id="GO:0019900">
    <property type="term" value="F:kinase binding"/>
    <property type="evidence" value="ECO:0000353"/>
    <property type="project" value="UniProtKB"/>
</dbReference>
<dbReference type="GO" id="GO:0003729">
    <property type="term" value="F:mRNA binding"/>
    <property type="evidence" value="ECO:0000318"/>
    <property type="project" value="GO_Central"/>
</dbReference>
<dbReference type="GO" id="GO:0005049">
    <property type="term" value="F:nuclear export signal receptor activity"/>
    <property type="evidence" value="ECO:0000314"/>
    <property type="project" value="GO_Central"/>
</dbReference>
<dbReference type="GO" id="GO:0003723">
    <property type="term" value="F:RNA binding"/>
    <property type="evidence" value="ECO:0007005"/>
    <property type="project" value="UniProtKB"/>
</dbReference>
<dbReference type="GO" id="GO:0035278">
    <property type="term" value="P:miRNA-mediated gene silencing by inhibition of translation"/>
    <property type="evidence" value="ECO:0000314"/>
    <property type="project" value="UniProtKB"/>
</dbReference>
<dbReference type="GO" id="GO:0048255">
    <property type="term" value="P:mRNA stabilization"/>
    <property type="evidence" value="ECO:0000314"/>
    <property type="project" value="UniProtKB"/>
</dbReference>
<dbReference type="GO" id="GO:0106289">
    <property type="term" value="P:negative regulation of deadenylation-dependent decapping of nuclear-transcribed mRNA"/>
    <property type="evidence" value="ECO:0000314"/>
    <property type="project" value="UniProtKB"/>
</dbReference>
<dbReference type="GO" id="GO:0045665">
    <property type="term" value="P:negative regulation of neuron differentiation"/>
    <property type="evidence" value="ECO:0007669"/>
    <property type="project" value="Ensembl"/>
</dbReference>
<dbReference type="GO" id="GO:0017148">
    <property type="term" value="P:negative regulation of translation"/>
    <property type="evidence" value="ECO:0000314"/>
    <property type="project" value="UniProtKB"/>
</dbReference>
<dbReference type="GO" id="GO:0030182">
    <property type="term" value="P:neuron differentiation"/>
    <property type="evidence" value="ECO:0007669"/>
    <property type="project" value="Ensembl"/>
</dbReference>
<dbReference type="GO" id="GO:0033962">
    <property type="term" value="P:P-body assembly"/>
    <property type="evidence" value="ECO:0000314"/>
    <property type="project" value="UniProtKB"/>
</dbReference>
<dbReference type="GO" id="GO:0060213">
    <property type="term" value="P:positive regulation of nuclear-transcribed mRNA poly(A) tail shortening"/>
    <property type="evidence" value="ECO:0000314"/>
    <property type="project" value="UniProtKB"/>
</dbReference>
<dbReference type="GO" id="GO:0006606">
    <property type="term" value="P:protein import into nucleus"/>
    <property type="evidence" value="ECO:0000314"/>
    <property type="project" value="UniProtKB"/>
</dbReference>
<dbReference type="GO" id="GO:0019827">
    <property type="term" value="P:stem cell population maintenance"/>
    <property type="evidence" value="ECO:0007669"/>
    <property type="project" value="Ensembl"/>
</dbReference>
<dbReference type="GO" id="GO:0006412">
    <property type="term" value="P:translation"/>
    <property type="evidence" value="ECO:0007669"/>
    <property type="project" value="Ensembl"/>
</dbReference>
<dbReference type="InterPro" id="IPR018862">
    <property type="entry name" value="eIF4E-T"/>
</dbReference>
<dbReference type="PANTHER" id="PTHR12269">
    <property type="entry name" value="EUKARYOTIC TRANSLATION INITIATION FACTOR 4E TRANSPORTER"/>
    <property type="match status" value="1"/>
</dbReference>
<dbReference type="PANTHER" id="PTHR12269:SF1">
    <property type="entry name" value="EUKARYOTIC TRANSLATION INITIATION FACTOR 4E TRANSPORTER"/>
    <property type="match status" value="1"/>
</dbReference>
<dbReference type="Pfam" id="PF10477">
    <property type="entry name" value="EIF4E-T"/>
    <property type="match status" value="1"/>
</dbReference>
<keyword id="KW-0002">3D-structure</keyword>
<keyword id="KW-0007">Acetylation</keyword>
<keyword id="KW-0025">Alternative splicing</keyword>
<keyword id="KW-0963">Cytoplasm</keyword>
<keyword id="KW-1017">Isopeptide bond</keyword>
<keyword id="KW-0539">Nucleus</keyword>
<keyword id="KW-0597">Phosphoprotein</keyword>
<keyword id="KW-0653">Protein transport</keyword>
<keyword id="KW-1267">Proteomics identification</keyword>
<keyword id="KW-1185">Reference proteome</keyword>
<keyword id="KW-0943">RNA-mediated gene silencing</keyword>
<keyword id="KW-0810">Translation regulation</keyword>
<keyword id="KW-0813">Transport</keyword>
<keyword id="KW-0832">Ubl conjugation</keyword>